<keyword id="KW-0002">3D-structure</keyword>
<keyword id="KW-0010">Activator</keyword>
<keyword id="KW-0238">DNA-binding</keyword>
<keyword id="KW-1017">Isopeptide bond</keyword>
<keyword id="KW-0539">Nucleus</keyword>
<keyword id="KW-0656">Proto-oncogene</keyword>
<keyword id="KW-1185">Reference proteome</keyword>
<keyword id="KW-0678">Repressor</keyword>
<keyword id="KW-0804">Transcription</keyword>
<keyword id="KW-0805">Transcription regulation</keyword>
<keyword id="KW-0043">Tumor suppressor</keyword>
<keyword id="KW-0832">Ubl conjugation</keyword>
<evidence type="ECO:0000250" key="1"/>
<evidence type="ECO:0000250" key="2">
    <source>
        <dbReference type="UniProtKB" id="Q9Y5Q3"/>
    </source>
</evidence>
<evidence type="ECO:0000255" key="3">
    <source>
        <dbReference type="PROSITE-ProRule" id="PRU00978"/>
    </source>
</evidence>
<evidence type="ECO:0000256" key="4">
    <source>
        <dbReference type="SAM" id="MobiDB-lite"/>
    </source>
</evidence>
<evidence type="ECO:0000269" key="5">
    <source>
    </source>
</evidence>
<evidence type="ECO:0000269" key="6">
    <source>
    </source>
</evidence>
<evidence type="ECO:0000269" key="7">
    <source>
    </source>
</evidence>
<evidence type="ECO:0000269" key="8">
    <source>
    </source>
</evidence>
<evidence type="ECO:0000269" key="9">
    <source>
    </source>
</evidence>
<evidence type="ECO:0000269" key="10">
    <source>
    </source>
</evidence>
<evidence type="ECO:0000269" key="11">
    <source>
    </source>
</evidence>
<evidence type="ECO:0000269" key="12">
    <source>
    </source>
</evidence>
<evidence type="ECO:0000269" key="13">
    <source>
    </source>
</evidence>
<evidence type="ECO:0000269" key="14">
    <source>
    </source>
</evidence>
<evidence type="ECO:0000269" key="15">
    <source>
    </source>
</evidence>
<evidence type="ECO:0000269" key="16">
    <source>
    </source>
</evidence>
<evidence type="ECO:0000269" key="17">
    <source>
    </source>
</evidence>
<evidence type="ECO:0000269" key="18">
    <source>
    </source>
</evidence>
<evidence type="ECO:0000269" key="19">
    <source>
    </source>
</evidence>
<evidence type="ECO:0000269" key="20">
    <source>
    </source>
</evidence>
<evidence type="ECO:0000269" key="21">
    <source>
    </source>
</evidence>
<evidence type="ECO:0000305" key="22"/>
<evidence type="ECO:0007829" key="23">
    <source>
        <dbReference type="PDB" id="2WT7"/>
    </source>
</evidence>
<evidence type="ECO:0007829" key="24">
    <source>
        <dbReference type="PDB" id="2WTY"/>
    </source>
</evidence>
<dbReference type="EMBL" id="L36435">
    <property type="protein sequence ID" value="AAA65689.1"/>
    <property type="molecule type" value="mRNA"/>
</dbReference>
<dbReference type="EMBL" id="AF180338">
    <property type="protein sequence ID" value="AAD56221.1"/>
    <property type="molecule type" value="Genomic_DNA"/>
</dbReference>
<dbReference type="EMBL" id="AK132425">
    <property type="protein sequence ID" value="BAE21161.1"/>
    <property type="molecule type" value="mRNA"/>
</dbReference>
<dbReference type="EMBL" id="AK143209">
    <property type="protein sequence ID" value="BAE25306.1"/>
    <property type="molecule type" value="mRNA"/>
</dbReference>
<dbReference type="EMBL" id="AK154830">
    <property type="protein sequence ID" value="BAE32860.1"/>
    <property type="molecule type" value="mRNA"/>
</dbReference>
<dbReference type="EMBL" id="AL591665">
    <property type="status" value="NOT_ANNOTATED_CDS"/>
    <property type="molecule type" value="Genomic_DNA"/>
</dbReference>
<dbReference type="EMBL" id="CH466551">
    <property type="protein sequence ID" value="EDL06288.1"/>
    <property type="molecule type" value="Genomic_DNA"/>
</dbReference>
<dbReference type="EMBL" id="BC016434">
    <property type="protein sequence ID" value="AAH16434.1"/>
    <property type="molecule type" value="mRNA"/>
</dbReference>
<dbReference type="EMBL" id="BC038256">
    <property type="protein sequence ID" value="AAH38256.1"/>
    <property type="molecule type" value="mRNA"/>
</dbReference>
<dbReference type="CCDS" id="CCDS16994.1"/>
<dbReference type="PIR" id="I49529">
    <property type="entry name" value="I49529"/>
</dbReference>
<dbReference type="RefSeq" id="NP_034788.1">
    <property type="nucleotide sequence ID" value="NM_010658.3"/>
</dbReference>
<dbReference type="PDB" id="2WT7">
    <property type="method" value="X-ray"/>
    <property type="resolution" value="2.30 A"/>
    <property type="chains" value="B=214-303"/>
</dbReference>
<dbReference type="PDB" id="2WTY">
    <property type="method" value="X-ray"/>
    <property type="resolution" value="2.90 A"/>
    <property type="chains" value="A/B=211-306"/>
</dbReference>
<dbReference type="PDB" id="4AUW">
    <property type="method" value="X-ray"/>
    <property type="resolution" value="2.90 A"/>
    <property type="chains" value="A/B/E/F=211-305"/>
</dbReference>
<dbReference type="PDBsum" id="2WT7"/>
<dbReference type="PDBsum" id="2WTY"/>
<dbReference type="PDBsum" id="4AUW"/>
<dbReference type="SMR" id="P54841"/>
<dbReference type="BioGRID" id="201014">
    <property type="interactions" value="5"/>
</dbReference>
<dbReference type="DIP" id="DIP-60663N"/>
<dbReference type="FunCoup" id="P54841">
    <property type="interactions" value="1112"/>
</dbReference>
<dbReference type="IntAct" id="P54841">
    <property type="interactions" value="2"/>
</dbReference>
<dbReference type="STRING" id="10090.ENSMUSP00000096728"/>
<dbReference type="iPTMnet" id="P54841"/>
<dbReference type="PhosphoSitePlus" id="P54841"/>
<dbReference type="PaxDb" id="10090-ENSMUSP00000096728"/>
<dbReference type="PeptideAtlas" id="P54841"/>
<dbReference type="ProteomicsDB" id="287292"/>
<dbReference type="Antibodypedia" id="956">
    <property type="antibodies" value="307 antibodies from 33 providers"/>
</dbReference>
<dbReference type="DNASU" id="16658"/>
<dbReference type="Ensembl" id="ENSMUST00000099126.5">
    <property type="protein sequence ID" value="ENSMUSP00000096728.4"/>
    <property type="gene ID" value="ENSMUSG00000074622.5"/>
</dbReference>
<dbReference type="GeneID" id="16658"/>
<dbReference type="KEGG" id="mmu:16658"/>
<dbReference type="UCSC" id="uc008nqw.2">
    <property type="organism name" value="mouse"/>
</dbReference>
<dbReference type="AGR" id="MGI:104555"/>
<dbReference type="CTD" id="9935"/>
<dbReference type="MGI" id="MGI:104555">
    <property type="gene designation" value="Mafb"/>
</dbReference>
<dbReference type="VEuPathDB" id="HostDB:ENSMUSG00000074622"/>
<dbReference type="eggNOG" id="KOG4196">
    <property type="taxonomic scope" value="Eukaryota"/>
</dbReference>
<dbReference type="GeneTree" id="ENSGT00940000160486"/>
<dbReference type="HOGENOM" id="CLU_063062_0_0_1"/>
<dbReference type="InParanoid" id="P54841"/>
<dbReference type="OMA" id="PTEQKHH"/>
<dbReference type="OrthoDB" id="5974330at2759"/>
<dbReference type="PhylomeDB" id="P54841"/>
<dbReference type="TreeFam" id="TF325689"/>
<dbReference type="BioGRID-ORCS" id="16658">
    <property type="hits" value="3 hits in 78 CRISPR screens"/>
</dbReference>
<dbReference type="ChiTaRS" id="Mafb">
    <property type="organism name" value="mouse"/>
</dbReference>
<dbReference type="EvolutionaryTrace" id="P54841"/>
<dbReference type="PRO" id="PR:P54841"/>
<dbReference type="Proteomes" id="UP000000589">
    <property type="component" value="Chromosome 2"/>
</dbReference>
<dbReference type="RNAct" id="P54841">
    <property type="molecule type" value="protein"/>
</dbReference>
<dbReference type="Bgee" id="ENSMUSG00000074622">
    <property type="expression patterns" value="Expressed in molar tooth and 237 other cell types or tissues"/>
</dbReference>
<dbReference type="GO" id="GO:0005654">
    <property type="term" value="C:nucleoplasm"/>
    <property type="evidence" value="ECO:0000304"/>
    <property type="project" value="Reactome"/>
</dbReference>
<dbReference type="GO" id="GO:0005634">
    <property type="term" value="C:nucleus"/>
    <property type="evidence" value="ECO:0000314"/>
    <property type="project" value="MGI"/>
</dbReference>
<dbReference type="GO" id="GO:0090575">
    <property type="term" value="C:RNA polymerase II transcription regulator complex"/>
    <property type="evidence" value="ECO:0007669"/>
    <property type="project" value="Ensembl"/>
</dbReference>
<dbReference type="GO" id="GO:0005667">
    <property type="term" value="C:transcription regulator complex"/>
    <property type="evidence" value="ECO:0000314"/>
    <property type="project" value="MGI"/>
</dbReference>
<dbReference type="GO" id="GO:0003677">
    <property type="term" value="F:DNA binding"/>
    <property type="evidence" value="ECO:0000314"/>
    <property type="project" value="MGI"/>
</dbReference>
<dbReference type="GO" id="GO:0001228">
    <property type="term" value="F:DNA-binding transcription activator activity, RNA polymerase II-specific"/>
    <property type="evidence" value="ECO:0000315"/>
    <property type="project" value="NTNU_SB"/>
</dbReference>
<dbReference type="GO" id="GO:0042802">
    <property type="term" value="F:identical protein binding"/>
    <property type="evidence" value="ECO:0007669"/>
    <property type="project" value="Ensembl"/>
</dbReference>
<dbReference type="GO" id="GO:0044877">
    <property type="term" value="F:protein-containing complex binding"/>
    <property type="evidence" value="ECO:0007669"/>
    <property type="project" value="Ensembl"/>
</dbReference>
<dbReference type="GO" id="GO:0000978">
    <property type="term" value="F:RNA polymerase II cis-regulatory region sequence-specific DNA binding"/>
    <property type="evidence" value="ECO:0000315"/>
    <property type="project" value="NTNU_SB"/>
</dbReference>
<dbReference type="GO" id="GO:0043565">
    <property type="term" value="F:sequence-specific DNA binding"/>
    <property type="evidence" value="ECO:0000314"/>
    <property type="project" value="UniProtKB"/>
</dbReference>
<dbReference type="GO" id="GO:0021599">
    <property type="term" value="P:abducens nerve formation"/>
    <property type="evidence" value="ECO:0000315"/>
    <property type="project" value="UniProtKB"/>
</dbReference>
<dbReference type="GO" id="GO:0035284">
    <property type="term" value="P:brain segmentation"/>
    <property type="evidence" value="ECO:0000315"/>
    <property type="project" value="MGI"/>
</dbReference>
<dbReference type="GO" id="GO:1903575">
    <property type="term" value="P:cornified envelope assembly"/>
    <property type="evidence" value="ECO:0000315"/>
    <property type="project" value="MGI"/>
</dbReference>
<dbReference type="GO" id="GO:0010467">
    <property type="term" value="P:gene expression"/>
    <property type="evidence" value="ECO:0000315"/>
    <property type="project" value="MGI"/>
</dbReference>
<dbReference type="GO" id="GO:0001701">
    <property type="term" value="P:in utero embryonic development"/>
    <property type="evidence" value="ECO:0000315"/>
    <property type="project" value="MGI"/>
</dbReference>
<dbReference type="GO" id="GO:0042472">
    <property type="term" value="P:inner ear morphogenesis"/>
    <property type="evidence" value="ECO:0000315"/>
    <property type="project" value="MGI"/>
</dbReference>
<dbReference type="GO" id="GO:0030216">
    <property type="term" value="P:keratinocyte differentiation"/>
    <property type="evidence" value="ECO:0000315"/>
    <property type="project" value="MGI"/>
</dbReference>
<dbReference type="GO" id="GO:0045647">
    <property type="term" value="P:negative regulation of erythrocyte differentiation"/>
    <property type="evidence" value="ECO:0007669"/>
    <property type="project" value="Ensembl"/>
</dbReference>
<dbReference type="GO" id="GO:0045671">
    <property type="term" value="P:negative regulation of osteoclast differentiation"/>
    <property type="evidence" value="ECO:0000314"/>
    <property type="project" value="UniProtKB"/>
</dbReference>
<dbReference type="GO" id="GO:0045893">
    <property type="term" value="P:positive regulation of DNA-templated transcription"/>
    <property type="evidence" value="ECO:0000314"/>
    <property type="project" value="UniProtKB"/>
</dbReference>
<dbReference type="GO" id="GO:0045944">
    <property type="term" value="P:positive regulation of transcription by RNA polymerase II"/>
    <property type="evidence" value="ECO:0000314"/>
    <property type="project" value="MGI"/>
</dbReference>
<dbReference type="GO" id="GO:0016485">
    <property type="term" value="P:protein processing"/>
    <property type="evidence" value="ECO:0000315"/>
    <property type="project" value="MGI"/>
</dbReference>
<dbReference type="GO" id="GO:0006357">
    <property type="term" value="P:regulation of transcription by RNA polymerase II"/>
    <property type="evidence" value="ECO:0000314"/>
    <property type="project" value="MGI"/>
</dbReference>
<dbReference type="GO" id="GO:0007585">
    <property type="term" value="P:respiratory gaseous exchange by respiratory system"/>
    <property type="evidence" value="ECO:0000315"/>
    <property type="project" value="MGI"/>
</dbReference>
<dbReference type="GO" id="GO:0007584">
    <property type="term" value="P:response to nutrient"/>
    <property type="evidence" value="ECO:0000315"/>
    <property type="project" value="MGI"/>
</dbReference>
<dbReference type="GO" id="GO:0021571">
    <property type="term" value="P:rhombomere 5 development"/>
    <property type="evidence" value="ECO:0000315"/>
    <property type="project" value="MGI"/>
</dbReference>
<dbReference type="GO" id="GO:0021572">
    <property type="term" value="P:rhombomere 6 development"/>
    <property type="evidence" value="ECO:0000315"/>
    <property type="project" value="MGI"/>
</dbReference>
<dbReference type="GO" id="GO:0007379">
    <property type="term" value="P:segment specification"/>
    <property type="evidence" value="ECO:0000315"/>
    <property type="project" value="MGI"/>
</dbReference>
<dbReference type="GO" id="GO:0033077">
    <property type="term" value="P:T cell differentiation in thymus"/>
    <property type="evidence" value="ECO:0000315"/>
    <property type="project" value="MGI"/>
</dbReference>
<dbReference type="GO" id="GO:0048538">
    <property type="term" value="P:thymus development"/>
    <property type="evidence" value="ECO:0000315"/>
    <property type="project" value="MGI"/>
</dbReference>
<dbReference type="CDD" id="cd14718">
    <property type="entry name" value="bZIP_Maf_large"/>
    <property type="match status" value="1"/>
</dbReference>
<dbReference type="FunFam" id="1.20.5.170:FF:000016">
    <property type="entry name" value="MAF bZIP transcription factor"/>
    <property type="match status" value="1"/>
</dbReference>
<dbReference type="Gene3D" id="1.20.5.170">
    <property type="match status" value="1"/>
</dbReference>
<dbReference type="InterPro" id="IPR004827">
    <property type="entry name" value="bZIP"/>
</dbReference>
<dbReference type="InterPro" id="IPR004826">
    <property type="entry name" value="bZIP_Maf"/>
</dbReference>
<dbReference type="InterPro" id="IPR046347">
    <property type="entry name" value="bZIP_sf"/>
</dbReference>
<dbReference type="InterPro" id="IPR013592">
    <property type="entry name" value="Maf_TF_N"/>
</dbReference>
<dbReference type="InterPro" id="IPR008917">
    <property type="entry name" value="TF_DNA-bd_sf"/>
</dbReference>
<dbReference type="InterPro" id="IPR024874">
    <property type="entry name" value="Transcription_factor_Maf_fam"/>
</dbReference>
<dbReference type="PANTHER" id="PTHR10129">
    <property type="entry name" value="TRANSCRIPTION FACTOR MAF"/>
    <property type="match status" value="1"/>
</dbReference>
<dbReference type="PANTHER" id="PTHR10129:SF10">
    <property type="entry name" value="TRANSCRIPTION FACTOR MAFB"/>
    <property type="match status" value="1"/>
</dbReference>
<dbReference type="Pfam" id="PF03131">
    <property type="entry name" value="bZIP_Maf"/>
    <property type="match status" value="1"/>
</dbReference>
<dbReference type="Pfam" id="PF08383">
    <property type="entry name" value="Maf_N"/>
    <property type="match status" value="1"/>
</dbReference>
<dbReference type="SMART" id="SM00338">
    <property type="entry name" value="BRLZ"/>
    <property type="match status" value="1"/>
</dbReference>
<dbReference type="SUPFAM" id="SSF47454">
    <property type="entry name" value="A DNA-binding domain in eukaryotic transcription factors"/>
    <property type="match status" value="1"/>
</dbReference>
<dbReference type="SUPFAM" id="SSF57959">
    <property type="entry name" value="Leucine zipper domain"/>
    <property type="match status" value="1"/>
</dbReference>
<dbReference type="PROSITE" id="PS50217">
    <property type="entry name" value="BZIP"/>
    <property type="match status" value="1"/>
</dbReference>
<accession>P54841</accession>
<accession>Q3U3C8</accession>
<accession>Q3UPT9</accession>
<feature type="chain" id="PRO_0000076495" description="Transcription factor MafB">
    <location>
        <begin position="1"/>
        <end position="323"/>
    </location>
</feature>
<feature type="domain" description="bZIP" evidence="3">
    <location>
        <begin position="238"/>
        <end position="301"/>
    </location>
</feature>
<feature type="region of interest" description="Disordered" evidence="4">
    <location>
        <begin position="34"/>
        <end position="78"/>
    </location>
</feature>
<feature type="region of interest" description="Disordered" evidence="4">
    <location>
        <begin position="116"/>
        <end position="210"/>
    </location>
</feature>
<feature type="region of interest" description="Basic motif" evidence="3">
    <location>
        <begin position="238"/>
        <end position="263"/>
    </location>
</feature>
<feature type="region of interest" description="Leucine-zipper" evidence="3">
    <location>
        <begin position="266"/>
        <end position="287"/>
    </location>
</feature>
<feature type="compositionally biased region" description="Basic and acidic residues" evidence="4">
    <location>
        <begin position="34"/>
        <end position="43"/>
    </location>
</feature>
<feature type="compositionally biased region" description="Low complexity" evidence="4">
    <location>
        <begin position="54"/>
        <end position="77"/>
    </location>
</feature>
<feature type="compositionally biased region" description="Basic residues" evidence="4">
    <location>
        <begin position="129"/>
        <end position="143"/>
    </location>
</feature>
<feature type="compositionally biased region" description="Basic residues" evidence="4">
    <location>
        <begin position="159"/>
        <end position="168"/>
    </location>
</feature>
<feature type="compositionally biased region" description="Low complexity" evidence="4">
    <location>
        <begin position="192"/>
        <end position="201"/>
    </location>
</feature>
<feature type="cross-link" description="Glycyl lysine isopeptide (Lys-Gly) (interchain with G-Cter in SUMO)" evidence="14">
    <location>
        <position position="32"/>
    </location>
</feature>
<feature type="cross-link" description="Glycyl lysine isopeptide (Lys-Gly) (interchain with G-Cter in SUMO)" evidence="14">
    <location>
        <position position="297"/>
    </location>
</feature>
<feature type="mutagenesis site" description="Loss of SUMO modification, increases transactivation activity, increases macrophage differentiation and inhibits myeloid progenitor growth; when associated with R-297." evidence="14">
    <original>K</original>
    <variation>R</variation>
    <location>
        <position position="32"/>
    </location>
</feature>
<feature type="mutagenesis site" description="Reduces ability to activate insulin and glucagon gene expression." evidence="17">
    <original>N</original>
    <variation>A</variation>
    <location>
        <position position="248"/>
    </location>
</feature>
<feature type="mutagenesis site" description="Loss of transcriptional activity." evidence="17">
    <original>N</original>
    <variation>S</variation>
    <location>
        <position position="248"/>
    </location>
</feature>
<feature type="mutagenesis site" description="Loss of SUMO modification, increases transactivation activity, increases macrophage differentiation and inhibits myeloid progenitor growth; when associated with R-32." evidence="14">
    <original>K</original>
    <variation>R</variation>
    <location>
        <position position="297"/>
    </location>
</feature>
<feature type="sequence conflict" description="In Ref. 3; BAE32860." evidence="22" ref="3">
    <original>Q</original>
    <variation>K</variation>
    <location>
        <position position="275"/>
    </location>
</feature>
<feature type="helix" evidence="23">
    <location>
        <begin position="215"/>
        <end position="218"/>
    </location>
</feature>
<feature type="helix" evidence="23">
    <location>
        <begin position="221"/>
        <end position="225"/>
    </location>
</feature>
<feature type="turn" evidence="24">
    <location>
        <begin position="228"/>
        <end position="230"/>
    </location>
</feature>
<feature type="helix" evidence="23">
    <location>
        <begin position="233"/>
        <end position="299"/>
    </location>
</feature>
<sequence>MAAELSMGQELPTSPLAMEYVNDFDLLKFDVKKEPLGRAERPGRPCTRLQPAGSVSSTPLSTPCSSVPSSPSFSPTEPKTHLEDLYWMASNYQQMNPEALNLTPEDAVEALIGSHPVPQPLQSFDGFRSAHHHHHHHHPHPHHGYPGAGVTHDDLGQHAHPHHHHHHQASPPPSSAASPAQQLPTSHPGPGPHATAAATAAGGNGSVEDRFSDDQLVSMSVRELNRHLRGFTKDEVIRLKQKRRTLKNRGYAQSCRYKRVQQKHHLENEKTQLIQQVEQLKQEVSRLARERDAYKVKCEKLANSGFREAGSTSDSPSSPEFFL</sequence>
<gene>
    <name type="primary">Mafb</name>
    <name type="synonym">Krml</name>
    <name type="synonym">Maf1</name>
</gene>
<organism>
    <name type="scientific">Mus musculus</name>
    <name type="common">Mouse</name>
    <dbReference type="NCBI Taxonomy" id="10090"/>
    <lineage>
        <taxon>Eukaryota</taxon>
        <taxon>Metazoa</taxon>
        <taxon>Chordata</taxon>
        <taxon>Craniata</taxon>
        <taxon>Vertebrata</taxon>
        <taxon>Euteleostomi</taxon>
        <taxon>Mammalia</taxon>
        <taxon>Eutheria</taxon>
        <taxon>Euarchontoglires</taxon>
        <taxon>Glires</taxon>
        <taxon>Rodentia</taxon>
        <taxon>Myomorpha</taxon>
        <taxon>Muroidea</taxon>
        <taxon>Muridae</taxon>
        <taxon>Murinae</taxon>
        <taxon>Mus</taxon>
        <taxon>Mus</taxon>
    </lineage>
</organism>
<reference key="1">
    <citation type="journal article" date="1994" name="Cell">
        <title>The mouse segmentation gene kr encodes a novel basic domain-leucine zipper transcription factor.</title>
        <authorList>
            <person name="Cordes S.P."/>
            <person name="Barsh G.S."/>
        </authorList>
    </citation>
    <scope>NUCLEOTIDE SEQUENCE [MRNA]</scope>
</reference>
<reference key="2">
    <citation type="journal article" date="2000" name="Gene">
        <title>Molecular cloning and functional characterization of the mouse mafB gene.</title>
        <authorList>
            <person name="Huang K."/>
            <person name="Serria M.S."/>
            <person name="Nakabayashi H."/>
            <person name="Nishi S."/>
            <person name="Sakai M."/>
        </authorList>
    </citation>
    <scope>NUCLEOTIDE SEQUENCE [GENOMIC DNA]</scope>
    <source>
        <strain>129/SvJ</strain>
    </source>
</reference>
<reference key="3">
    <citation type="journal article" date="2005" name="Science">
        <title>The transcriptional landscape of the mammalian genome.</title>
        <authorList>
            <person name="Carninci P."/>
            <person name="Kasukawa T."/>
            <person name="Katayama S."/>
            <person name="Gough J."/>
            <person name="Frith M.C."/>
            <person name="Maeda N."/>
            <person name="Oyama R."/>
            <person name="Ravasi T."/>
            <person name="Lenhard B."/>
            <person name="Wells C."/>
            <person name="Kodzius R."/>
            <person name="Shimokawa K."/>
            <person name="Bajic V.B."/>
            <person name="Brenner S.E."/>
            <person name="Batalov S."/>
            <person name="Forrest A.R."/>
            <person name="Zavolan M."/>
            <person name="Davis M.J."/>
            <person name="Wilming L.G."/>
            <person name="Aidinis V."/>
            <person name="Allen J.E."/>
            <person name="Ambesi-Impiombato A."/>
            <person name="Apweiler R."/>
            <person name="Aturaliya R.N."/>
            <person name="Bailey T.L."/>
            <person name="Bansal M."/>
            <person name="Baxter L."/>
            <person name="Beisel K.W."/>
            <person name="Bersano T."/>
            <person name="Bono H."/>
            <person name="Chalk A.M."/>
            <person name="Chiu K.P."/>
            <person name="Choudhary V."/>
            <person name="Christoffels A."/>
            <person name="Clutterbuck D.R."/>
            <person name="Crowe M.L."/>
            <person name="Dalla E."/>
            <person name="Dalrymple B.P."/>
            <person name="de Bono B."/>
            <person name="Della Gatta G."/>
            <person name="di Bernardo D."/>
            <person name="Down T."/>
            <person name="Engstrom P."/>
            <person name="Fagiolini M."/>
            <person name="Faulkner G."/>
            <person name="Fletcher C.F."/>
            <person name="Fukushima T."/>
            <person name="Furuno M."/>
            <person name="Futaki S."/>
            <person name="Gariboldi M."/>
            <person name="Georgii-Hemming P."/>
            <person name="Gingeras T.R."/>
            <person name="Gojobori T."/>
            <person name="Green R.E."/>
            <person name="Gustincich S."/>
            <person name="Harbers M."/>
            <person name="Hayashi Y."/>
            <person name="Hensch T.K."/>
            <person name="Hirokawa N."/>
            <person name="Hill D."/>
            <person name="Huminiecki L."/>
            <person name="Iacono M."/>
            <person name="Ikeo K."/>
            <person name="Iwama A."/>
            <person name="Ishikawa T."/>
            <person name="Jakt M."/>
            <person name="Kanapin A."/>
            <person name="Katoh M."/>
            <person name="Kawasawa Y."/>
            <person name="Kelso J."/>
            <person name="Kitamura H."/>
            <person name="Kitano H."/>
            <person name="Kollias G."/>
            <person name="Krishnan S.P."/>
            <person name="Kruger A."/>
            <person name="Kummerfeld S.K."/>
            <person name="Kurochkin I.V."/>
            <person name="Lareau L.F."/>
            <person name="Lazarevic D."/>
            <person name="Lipovich L."/>
            <person name="Liu J."/>
            <person name="Liuni S."/>
            <person name="McWilliam S."/>
            <person name="Madan Babu M."/>
            <person name="Madera M."/>
            <person name="Marchionni L."/>
            <person name="Matsuda H."/>
            <person name="Matsuzawa S."/>
            <person name="Miki H."/>
            <person name="Mignone F."/>
            <person name="Miyake S."/>
            <person name="Morris K."/>
            <person name="Mottagui-Tabar S."/>
            <person name="Mulder N."/>
            <person name="Nakano N."/>
            <person name="Nakauchi H."/>
            <person name="Ng P."/>
            <person name="Nilsson R."/>
            <person name="Nishiguchi S."/>
            <person name="Nishikawa S."/>
            <person name="Nori F."/>
            <person name="Ohara O."/>
            <person name="Okazaki Y."/>
            <person name="Orlando V."/>
            <person name="Pang K.C."/>
            <person name="Pavan W.J."/>
            <person name="Pavesi G."/>
            <person name="Pesole G."/>
            <person name="Petrovsky N."/>
            <person name="Piazza S."/>
            <person name="Reed J."/>
            <person name="Reid J.F."/>
            <person name="Ring B.Z."/>
            <person name="Ringwald M."/>
            <person name="Rost B."/>
            <person name="Ruan Y."/>
            <person name="Salzberg S.L."/>
            <person name="Sandelin A."/>
            <person name="Schneider C."/>
            <person name="Schoenbach C."/>
            <person name="Sekiguchi K."/>
            <person name="Semple C.A."/>
            <person name="Seno S."/>
            <person name="Sessa L."/>
            <person name="Sheng Y."/>
            <person name="Shibata Y."/>
            <person name="Shimada H."/>
            <person name="Shimada K."/>
            <person name="Silva D."/>
            <person name="Sinclair B."/>
            <person name="Sperling S."/>
            <person name="Stupka E."/>
            <person name="Sugiura K."/>
            <person name="Sultana R."/>
            <person name="Takenaka Y."/>
            <person name="Taki K."/>
            <person name="Tammoja K."/>
            <person name="Tan S.L."/>
            <person name="Tang S."/>
            <person name="Taylor M.S."/>
            <person name="Tegner J."/>
            <person name="Teichmann S.A."/>
            <person name="Ueda H.R."/>
            <person name="van Nimwegen E."/>
            <person name="Verardo R."/>
            <person name="Wei C.L."/>
            <person name="Yagi K."/>
            <person name="Yamanishi H."/>
            <person name="Zabarovsky E."/>
            <person name="Zhu S."/>
            <person name="Zimmer A."/>
            <person name="Hide W."/>
            <person name="Bult C."/>
            <person name="Grimmond S.M."/>
            <person name="Teasdale R.D."/>
            <person name="Liu E.T."/>
            <person name="Brusic V."/>
            <person name="Quackenbush J."/>
            <person name="Wahlestedt C."/>
            <person name="Mattick J.S."/>
            <person name="Hume D.A."/>
            <person name="Kai C."/>
            <person name="Sasaki D."/>
            <person name="Tomaru Y."/>
            <person name="Fukuda S."/>
            <person name="Kanamori-Katayama M."/>
            <person name="Suzuki M."/>
            <person name="Aoki J."/>
            <person name="Arakawa T."/>
            <person name="Iida J."/>
            <person name="Imamura K."/>
            <person name="Itoh M."/>
            <person name="Kato T."/>
            <person name="Kawaji H."/>
            <person name="Kawagashira N."/>
            <person name="Kawashima T."/>
            <person name="Kojima M."/>
            <person name="Kondo S."/>
            <person name="Konno H."/>
            <person name="Nakano K."/>
            <person name="Ninomiya N."/>
            <person name="Nishio T."/>
            <person name="Okada M."/>
            <person name="Plessy C."/>
            <person name="Shibata K."/>
            <person name="Shiraki T."/>
            <person name="Suzuki S."/>
            <person name="Tagami M."/>
            <person name="Waki K."/>
            <person name="Watahiki A."/>
            <person name="Okamura-Oho Y."/>
            <person name="Suzuki H."/>
            <person name="Kawai J."/>
            <person name="Hayashizaki Y."/>
        </authorList>
    </citation>
    <scope>NUCLEOTIDE SEQUENCE [LARGE SCALE MRNA]</scope>
    <source>
        <strain>C57BL/6J</strain>
        <strain>NOD</strain>
        <tissue>Eye</tissue>
        <tissue>Skin</tissue>
    </source>
</reference>
<reference key="4">
    <citation type="journal article" date="2009" name="PLoS Biol.">
        <title>Lineage-specific biology revealed by a finished genome assembly of the mouse.</title>
        <authorList>
            <person name="Church D.M."/>
            <person name="Goodstadt L."/>
            <person name="Hillier L.W."/>
            <person name="Zody M.C."/>
            <person name="Goldstein S."/>
            <person name="She X."/>
            <person name="Bult C.J."/>
            <person name="Agarwala R."/>
            <person name="Cherry J.L."/>
            <person name="DiCuccio M."/>
            <person name="Hlavina W."/>
            <person name="Kapustin Y."/>
            <person name="Meric P."/>
            <person name="Maglott D."/>
            <person name="Birtle Z."/>
            <person name="Marques A.C."/>
            <person name="Graves T."/>
            <person name="Zhou S."/>
            <person name="Teague B."/>
            <person name="Potamousis K."/>
            <person name="Churas C."/>
            <person name="Place M."/>
            <person name="Herschleb J."/>
            <person name="Runnheim R."/>
            <person name="Forrest D."/>
            <person name="Amos-Landgraf J."/>
            <person name="Schwartz D.C."/>
            <person name="Cheng Z."/>
            <person name="Lindblad-Toh K."/>
            <person name="Eichler E.E."/>
            <person name="Ponting C.P."/>
        </authorList>
    </citation>
    <scope>NUCLEOTIDE SEQUENCE [LARGE SCALE GENOMIC DNA]</scope>
    <source>
        <strain>C57BL/6J</strain>
    </source>
</reference>
<reference key="5">
    <citation type="submission" date="2007-06" db="EMBL/GenBank/DDBJ databases">
        <authorList>
            <person name="Mural R.J."/>
            <person name="Adams M.D."/>
            <person name="Myers E.W."/>
            <person name="Smith H.O."/>
            <person name="Venter J.C."/>
        </authorList>
    </citation>
    <scope>NUCLEOTIDE SEQUENCE [LARGE SCALE GENOMIC DNA]</scope>
</reference>
<reference key="6">
    <citation type="journal article" date="2004" name="Genome Res.">
        <title>The status, quality, and expansion of the NIH full-length cDNA project: the Mammalian Gene Collection (MGC).</title>
        <authorList>
            <consortium name="The MGC Project Team"/>
        </authorList>
    </citation>
    <scope>NUCLEOTIDE SEQUENCE [LARGE SCALE MRNA]</scope>
    <source>
        <strain>FVB/N</strain>
        <tissue>Liver</tissue>
        <tissue>Mammary gland</tissue>
    </source>
</reference>
<reference key="7">
    <citation type="journal article" date="1999" name="J. Biol. Chem.">
        <title>Regulation of lens fiber cell differentiation by transcription factor c-Maf.</title>
        <authorList>
            <person name="Kawauchi S."/>
            <person name="Takahashi S."/>
            <person name="Nakajima O."/>
            <person name="Ogino H."/>
            <person name="Morita M."/>
            <person name="Nishizawa M."/>
            <person name="Yasuda K."/>
            <person name="Yamamoto M."/>
        </authorList>
    </citation>
    <scope>DEVELOPMENTAL STAGE</scope>
</reference>
<reference key="8">
    <citation type="journal article" date="2000" name="EMBO J.">
        <title>MafB is an inducer of monocytic differentiation.</title>
        <authorList>
            <person name="Kelly L.M."/>
            <person name="Englmeier U."/>
            <person name="Lafon I."/>
            <person name="Sieweke M.H."/>
            <person name="Graf T."/>
        </authorList>
    </citation>
    <scope>FUNCTION</scope>
    <scope>INTERACTION WITH ETS1</scope>
</reference>
<reference key="9">
    <citation type="journal article" date="2002" name="EMBO J.">
        <title>Krox20 and kreisler co-operate in the transcriptional control of segmental expression of Hoxb3 in the developing hindbrain.</title>
        <authorList>
            <person name="Manzanares M."/>
            <person name="Nardelli J."/>
            <person name="Gilardi-Hebenstreit P."/>
            <person name="Marshall H."/>
            <person name="Giudicelli F."/>
            <person name="Martinez-Pastor M.T."/>
            <person name="Krumlauf R."/>
            <person name="Charnay P."/>
        </authorList>
    </citation>
    <scope>FUNCTION</scope>
</reference>
<reference key="10">
    <citation type="journal article" date="2003" name="Nat. Neurosci.">
        <title>MafB deficiency causes defective respiratory rhythmogenesis and fatal central apnea at birth.</title>
        <authorList>
            <person name="Blanchi B."/>
            <person name="Kelly L.M."/>
            <person name="Viemari J.-C."/>
            <person name="Lafon I."/>
            <person name="Burnet H."/>
            <person name="Bevengut M."/>
            <person name="Tillmanns S."/>
            <person name="Daniel L."/>
            <person name="Graf T."/>
            <person name="Hilaire G."/>
            <person name="Sieweke M.H."/>
        </authorList>
    </citation>
    <scope>DISRUPTION PHENOTYPE</scope>
</reference>
<reference key="11">
    <citation type="journal article" date="2004" name="FEBS Lett.">
        <title>Low-density lipoprotein receptor-related protein interacts with MafB, a regulator of hindbrain development.</title>
        <authorList>
            <person name="Petersen H.H."/>
            <person name="Hilpert J."/>
            <person name="Jacobsen C."/>
            <person name="Lauwers A."/>
            <person name="Roebroek A.J.M."/>
            <person name="Willnow T.E."/>
        </authorList>
    </citation>
    <scope>INTERACTION WITH LRP1</scope>
    <scope>SUBCELLULAR LOCATION</scope>
</reference>
<reference key="12">
    <citation type="journal article" date="2006" name="Diabetes">
        <title>MafB: an activator of the glucagon gene expressed in developing islet alpha- and beta-cells.</title>
        <authorList>
            <person name="Artner I."/>
            <person name="Le Lay J."/>
            <person name="Hang Y."/>
            <person name="Elghazi L."/>
            <person name="Schisler J.C."/>
            <person name="Henderson E."/>
            <person name="Sosa-Pineda B."/>
            <person name="Stein R."/>
        </authorList>
    </citation>
    <scope>FUNCTION</scope>
    <scope>DNA-BINDING</scope>
    <scope>DEVELOPMENTAL STAGE</scope>
    <scope>TISSUE SPECIFICITY</scope>
</reference>
<reference key="13">
    <citation type="journal article" date="2006" name="Mol. Cell. Biol.">
        <title>MafB is essential for renal development and F4/80 expression in macrophages.</title>
        <authorList>
            <person name="Moriguchi T."/>
            <person name="Hamada M."/>
            <person name="Morito N."/>
            <person name="Terunuma T."/>
            <person name="Hasegawa K."/>
            <person name="Zhang C."/>
            <person name="Yokomizo T."/>
            <person name="Esaki R."/>
            <person name="Kuroda E."/>
            <person name="Yoh K."/>
            <person name="Kudo T."/>
            <person name="Nagata M."/>
            <person name="Greaves D.R."/>
            <person name="Engel J.D."/>
            <person name="Yamamoto M."/>
            <person name="Takahashi S."/>
        </authorList>
    </citation>
    <scope>FUNCTION</scope>
    <scope>DISRUPTION PHENOTYPE</scope>
    <scope>TISSUE SPECIFICITY</scope>
</reference>
<reference key="14">
    <citation type="journal article" date="2006" name="Mol. Cell. Biol.">
        <title>Development of macrophages with altered actin organization in the absence of MafB.</title>
        <authorList>
            <person name="Aziz A."/>
            <person name="Vanhille L."/>
            <person name="Mohideen P."/>
            <person name="Kelly L.M."/>
            <person name="Otto C."/>
            <person name="Bakri Y."/>
            <person name="Mossadegh N."/>
            <person name="Sarrazin S."/>
            <person name="Sieweke M.H."/>
        </authorList>
    </citation>
    <scope>DISRUPTION PHENOTYPE</scope>
</reference>
<reference key="15">
    <citation type="journal article" date="2007" name="J. Biol. Chem.">
        <title>Pax-6 and c-Maf functionally interact with the alpha-cell-specific DNA element G1 in vivo to promote glucagon gene expression.</title>
        <authorList>
            <person name="Gosmain Y."/>
            <person name="Avril I."/>
            <person name="Mamin A."/>
            <person name="Philippe J."/>
        </authorList>
    </citation>
    <scope>FUNCTION</scope>
    <scope>SUBUNIT</scope>
    <scope>INTERACTION WITH PAX6</scope>
    <scope>DNA-BINDING</scope>
    <scope>TISSUE SPECIFICITY</scope>
    <scope>DEVELOPMENTAL STAGE</scope>
</reference>
<reference key="16">
    <citation type="journal article" date="2007" name="Mol. Cell. Biol.">
        <title>SUMO modification regulates MafB-driven macrophage differentiation by enabling Myb-dependent transcriptional repression.</title>
        <authorList>
            <person name="Tillmanns S."/>
            <person name="Otto C."/>
            <person name="Jaffray E."/>
            <person name="Du Roure C."/>
            <person name="Bakri Y."/>
            <person name="Vanhille L."/>
            <person name="Sarrazin S."/>
            <person name="Hay R.T."/>
            <person name="Sieweke M.H."/>
        </authorList>
    </citation>
    <scope>FUNCTION</scope>
    <scope>SUMOYLATION AT LYS-32 AND LYS-297</scope>
    <scope>MUTAGENESIS OF LYS-32 AND LYS-297</scope>
</reference>
<reference key="17">
    <citation type="journal article" date="2007" name="Proc. Natl. Acad. Sci. U.S.A.">
        <title>MafB is required for islet beta cell maturation.</title>
        <authorList>
            <person name="Artner I."/>
            <person name="Blanchi B."/>
            <person name="Raum J.C."/>
            <person name="Guo M."/>
            <person name="Kaneko T."/>
            <person name="Cordes S."/>
            <person name="Sieweke M."/>
            <person name="Stein R."/>
        </authorList>
    </citation>
    <scope>DISRUPTION PHENOTYPE</scope>
</reference>
<reference key="18">
    <citation type="journal article" date="2008" name="Dev. Biol.">
        <title>Preferential reduction of beta cells derived from Pax6-MafB pathway in MafB deficient mice.</title>
        <authorList>
            <person name="Nishimura W."/>
            <person name="Rowan S."/>
            <person name="Salameh T."/>
            <person name="Maas R.L."/>
            <person name="Bonner-Weir S."/>
            <person name="Sell S.M."/>
            <person name="Sharma A."/>
        </authorList>
    </citation>
    <scope>FUNCTION</scope>
    <scope>MUTAGENESIS OF ASN-248</scope>
    <scope>DISRUPTION PHENOTYPE</scope>
</reference>
<reference key="19">
    <citation type="journal article" date="2008" name="Mol. Cell. Neurosci.">
        <title>Math5 expression and function in the central auditory system.</title>
        <authorList>
            <person name="Saul S.M."/>
            <person name="Brzezinski J.A. IV"/>
            <person name="Altschuler R.A."/>
            <person name="Shore S.E."/>
            <person name="Rudolph D.D."/>
            <person name="Kabara L.L."/>
            <person name="Halsey K.E."/>
            <person name="Hufnagel R.B."/>
            <person name="Zhou J."/>
            <person name="Dolan D.F."/>
            <person name="Glaser T."/>
        </authorList>
    </citation>
    <scope>DEVELOPMENTAL STAGE</scope>
</reference>
<reference key="20">
    <citation type="journal article" date="2008" name="Nat. Rev. Cancer">
        <title>A new MAFia in cancer.</title>
        <authorList>
            <person name="Eychene A."/>
            <person name="Rocques N."/>
            <person name="Pouponnot C."/>
        </authorList>
    </citation>
    <scope>REVIEW</scope>
    <scope>FUNCTION</scope>
</reference>
<reference key="21">
    <citation type="journal article" date="2009" name="EMBO J.">
        <title>Transcription factor C/EBPbeta isoform ratio regulates osteoclastogenesis through MafB.</title>
        <authorList>
            <person name="Smink J.J."/>
            <person name="Begay V."/>
            <person name="Schoenmaker T."/>
            <person name="Sterneck E."/>
            <person name="de Vries T.J."/>
            <person name="Leutz A."/>
        </authorList>
    </citation>
    <scope>FUNCTION</scope>
</reference>
<reference key="22">
    <citation type="journal article" date="2016" name="Am. J. Hum. Genet.">
        <title>Loss of MAFB function in humans and mice causes Duane syndrome, aberrant extraocular muscle innervation, and inner-ear defects.</title>
        <authorList>
            <person name="Park J.G."/>
            <person name="Tischfield M.A."/>
            <person name="Nugent A.A."/>
            <person name="Cheng L."/>
            <person name="Di Gioia S.A."/>
            <person name="Chan W.M."/>
            <person name="Maconachie G."/>
            <person name="Bosley T.M."/>
            <person name="Summers C.G."/>
            <person name="Hunter D.G."/>
            <person name="Robson C.D."/>
            <person name="Gottlob I."/>
            <person name="Engle E.C."/>
        </authorList>
    </citation>
    <scope>DISRUPTION PHENOTYPE</scope>
</reference>
<proteinExistence type="evidence at protein level"/>
<comment type="function">
    <text evidence="2 6 7 10 11 14 15 17 18 19">Acts as a transcriptional activator or repressor. Plays a pivotal role in regulating lineage-specific hematopoiesis by repressing ETS1-mediated transcription of erythroid-specific genes in myeloid cells. Required for monocytic, macrophage, osteoclast, podocyte and islet beta cell differentiation. Involved in renal tubule survival and F4/80 maturation. Activates the insulin and glucagon promoters. Together with PAX6, transactivates weakly the glucagon gene promoter through the G1 element. SUMO modification controls its transcriptional activity and ability to specify macrophage fate. Binds element G1 on the glucagon promoter. Involved either as an oncogene or as a tumor suppressor, depending on the cell context. Required for the transcriptional activation of HOXB3 in the rhombomere r5 in the hindbrain (PubMed:11823429).</text>
</comment>
<comment type="subunit">
    <text evidence="1 6 9 15">Homodimer or heterodimer with other bHLH-Zip transcription factors. Forms homodimers and heterodimers with FOS, FOSB and FOSL2, but not with JUN proteins (JUN, JUNB and JUND). Interacts with the intracellular cytoplasmic domain of LRP1 (LRPICD); the interaction results in a moderate reduction of MAFB transcriptional potential (By similarity). Binds DNA as a homodimer or a heterodimer. Interacts with PAX6; the interaction is direct. Interacts with ETS1 and LRP1.</text>
</comment>
<comment type="interaction">
    <interactant intactId="EBI-16093217">
        <id>P54841</id>
    </interactant>
    <interactant intactId="EBI-4288185">
        <id>P01101</id>
        <label>Fos</label>
    </interactant>
    <organismsDiffer>false</organismsDiffer>
    <experiments>4</experiments>
</comment>
<comment type="subcellular location">
    <subcellularLocation>
        <location evidence="3 9">Nucleus</location>
    </subcellularLocation>
</comment>
<comment type="tissue specificity">
    <text evidence="10 11 15">Expressed in pancreatic alpha-cells (glucagon-positive cells), in podocytes of the kidney and macrophages (at protein level). Most abundant in kidney, gut, lung and brain.</text>
</comment>
<comment type="developmental stage">
    <text evidence="5 10 15 16 21">Expressed in pancreatic alpha-cells at 10.5 dpc (PubMed:17901057). Expressed in insulin and glucagon islet progenitor cells at 12 dpc onwards (at protein level) (PubMed:16443760). Detectable at 8.0 dpc (one somite) as a band in the caudal hindbrain and by 8.5 dpc (six to eight somites) as a sharp rostral edge coincident with the rhombomeres (r) 4 and 5 boundary and a diffuse caudal edge located midway through r6 (PubMed:8001130). Expressed in the lens epithelial cells at 10.5 to 14.5 dpc (PubMed:10383433). Expressed in the cochlear nucleus at 15.5 dpc (PubMed:17977745).</text>
</comment>
<comment type="domain">
    <text>The leucine-zipper domain is involved in the interaction with LRPICD.</text>
</comment>
<comment type="PTM">
    <text evidence="14">Sumoylated. Sumoylation on Lys-32 and Lys-297 stimulates its transcriptional repression activity and promotes macrophage differentiation from myeloid progenitors.</text>
</comment>
<comment type="disruption phenotype">
    <text evidence="8 11 12 13 17 20">Mice show a defect in frequency of respiratory rhythm with a fatal apnea at birth due to lack of neurons from the preBoetC region. They displayed renal dysgenesis with abnormal podocyte differentiation as well as tubular apoptosis. They show altered actin-dependent macrophage morphology. They show a reduced number of cells expressing insulin and glucagon. Embryos also lack the abducens nerve which normaly innervates the lateral rectus muscle that is involved in eye movement (PubMed:27181683).</text>
</comment>
<comment type="similarity">
    <text evidence="22">Belongs to the bZIP family. Maf subfamily.</text>
</comment>
<protein>
    <recommendedName>
        <fullName>Transcription factor MafB</fullName>
        <shortName>Maf-B</shortName>
    </recommendedName>
    <alternativeName>
        <fullName>Kreisler</fullName>
    </alternativeName>
    <alternativeName>
        <fullName>Segmentation protein Kr</fullName>
    </alternativeName>
    <alternativeName>
        <fullName>Transcription factor Maf-1</fullName>
    </alternativeName>
    <alternativeName>
        <fullName>V-maf musculoaponeurotic fibrosarcoma oncogene homolog B</fullName>
    </alternativeName>
</protein>
<name>MAFB_MOUSE</name>